<dbReference type="EMBL" id="AL121832">
    <property type="status" value="NOT_ANNOTATED_CDS"/>
    <property type="molecule type" value="Genomic_DNA"/>
</dbReference>
<dbReference type="EMBL" id="BC003122">
    <property type="protein sequence ID" value="AAH03122.1"/>
    <property type="molecule type" value="mRNA"/>
</dbReference>
<dbReference type="CCDS" id="CCDS33503.1"/>
<dbReference type="RefSeq" id="NP_112492.2">
    <property type="nucleotide sequence ID" value="NM_031215.3"/>
</dbReference>
<dbReference type="SMR" id="Q9BTV7"/>
<dbReference type="BioGRID" id="123628">
    <property type="interactions" value="19"/>
</dbReference>
<dbReference type="FunCoup" id="Q9BTV7">
    <property type="interactions" value="1351"/>
</dbReference>
<dbReference type="IntAct" id="Q9BTV7">
    <property type="interactions" value="8"/>
</dbReference>
<dbReference type="STRING" id="9606.ENSP00000279101"/>
<dbReference type="GlyCosmos" id="Q9BTV7">
    <property type="glycosylation" value="1 site, 2 glycans"/>
</dbReference>
<dbReference type="GlyGen" id="Q9BTV7">
    <property type="glycosylation" value="2 sites, 2 O-linked glycans (1 site)"/>
</dbReference>
<dbReference type="iPTMnet" id="Q9BTV7"/>
<dbReference type="PhosphoSitePlus" id="Q9BTV7"/>
<dbReference type="BioMuta" id="CABLES2"/>
<dbReference type="DMDM" id="109940186"/>
<dbReference type="jPOST" id="Q9BTV7"/>
<dbReference type="MassIVE" id="Q9BTV7"/>
<dbReference type="PaxDb" id="9606-ENSP00000279101"/>
<dbReference type="PeptideAtlas" id="Q9BTV7"/>
<dbReference type="ProteomicsDB" id="79015"/>
<dbReference type="Pumba" id="Q9BTV7"/>
<dbReference type="Antibodypedia" id="29526">
    <property type="antibodies" value="110 antibodies from 22 providers"/>
</dbReference>
<dbReference type="DNASU" id="81928"/>
<dbReference type="Ensembl" id="ENST00000279101.10">
    <property type="protein sequence ID" value="ENSP00000279101.5"/>
    <property type="gene ID" value="ENSG00000149679.12"/>
</dbReference>
<dbReference type="GeneID" id="81928"/>
<dbReference type="KEGG" id="hsa:81928"/>
<dbReference type="MANE-Select" id="ENST00000279101.10">
    <property type="protein sequence ID" value="ENSP00000279101.5"/>
    <property type="RefSeq nucleotide sequence ID" value="NM_031215.3"/>
    <property type="RefSeq protein sequence ID" value="NP_112492.2"/>
</dbReference>
<dbReference type="UCSC" id="uc002ycv.3">
    <property type="organism name" value="human"/>
</dbReference>
<dbReference type="AGR" id="HGNC:16143"/>
<dbReference type="CTD" id="81928"/>
<dbReference type="DisGeNET" id="81928"/>
<dbReference type="GeneCards" id="CABLES2"/>
<dbReference type="HGNC" id="HGNC:16143">
    <property type="gene designation" value="CABLES2"/>
</dbReference>
<dbReference type="HPA" id="ENSG00000149679">
    <property type="expression patterns" value="Tissue enhanced (testis)"/>
</dbReference>
<dbReference type="MIM" id="618772">
    <property type="type" value="gene"/>
</dbReference>
<dbReference type="neXtProt" id="NX_Q9BTV7"/>
<dbReference type="OpenTargets" id="ENSG00000149679"/>
<dbReference type="PharmGKB" id="PA25692"/>
<dbReference type="VEuPathDB" id="HostDB:ENSG00000149679"/>
<dbReference type="eggNOG" id="KOG4164">
    <property type="taxonomic scope" value="Eukaryota"/>
</dbReference>
<dbReference type="GeneTree" id="ENSGT00400000022086"/>
<dbReference type="HOGENOM" id="CLU_021942_2_1_1"/>
<dbReference type="InParanoid" id="Q9BTV7"/>
<dbReference type="OMA" id="CRTKHIS"/>
<dbReference type="OrthoDB" id="5353095at2759"/>
<dbReference type="PAN-GO" id="Q9BTV7">
    <property type="GO annotations" value="0 GO annotations based on evolutionary models"/>
</dbReference>
<dbReference type="PhylomeDB" id="Q9BTV7"/>
<dbReference type="TreeFam" id="TF323936"/>
<dbReference type="PathwayCommons" id="Q9BTV7"/>
<dbReference type="Reactome" id="R-HSA-983231">
    <property type="pathway name" value="Factors involved in megakaryocyte development and platelet production"/>
</dbReference>
<dbReference type="SignaLink" id="Q9BTV7"/>
<dbReference type="BioGRID-ORCS" id="81928">
    <property type="hits" value="12 hits in 1161 CRISPR screens"/>
</dbReference>
<dbReference type="ChiTaRS" id="CABLES2">
    <property type="organism name" value="human"/>
</dbReference>
<dbReference type="GenomeRNAi" id="81928"/>
<dbReference type="Pharos" id="Q9BTV7">
    <property type="development level" value="Tbio"/>
</dbReference>
<dbReference type="PRO" id="PR:Q9BTV7"/>
<dbReference type="Proteomes" id="UP000005640">
    <property type="component" value="Chromosome 20"/>
</dbReference>
<dbReference type="RNAct" id="Q9BTV7">
    <property type="molecule type" value="protein"/>
</dbReference>
<dbReference type="Bgee" id="ENSG00000149679">
    <property type="expression patterns" value="Expressed in sperm and 147 other cell types or tissues"/>
</dbReference>
<dbReference type="ExpressionAtlas" id="Q9BTV7">
    <property type="expression patterns" value="baseline and differential"/>
</dbReference>
<dbReference type="GO" id="GO:0051301">
    <property type="term" value="P:cell division"/>
    <property type="evidence" value="ECO:0007669"/>
    <property type="project" value="UniProtKB-KW"/>
</dbReference>
<dbReference type="GO" id="GO:0051726">
    <property type="term" value="P:regulation of cell cycle"/>
    <property type="evidence" value="ECO:0007669"/>
    <property type="project" value="InterPro"/>
</dbReference>
<dbReference type="CDD" id="cd20603">
    <property type="entry name" value="CYCLIN_CABLES2"/>
    <property type="match status" value="1"/>
</dbReference>
<dbReference type="FunFam" id="1.10.472.10:FF:000020">
    <property type="entry name" value="CDK5 and ABL1 enzyme substrate 1"/>
    <property type="match status" value="1"/>
</dbReference>
<dbReference type="Gene3D" id="1.10.472.10">
    <property type="entry name" value="Cyclin-like"/>
    <property type="match status" value="1"/>
</dbReference>
<dbReference type="InterPro" id="IPR012388">
    <property type="entry name" value="CABLES1/2"/>
</dbReference>
<dbReference type="InterPro" id="IPR036915">
    <property type="entry name" value="Cyclin-like_sf"/>
</dbReference>
<dbReference type="InterPro" id="IPR006671">
    <property type="entry name" value="Cyclin_N"/>
</dbReference>
<dbReference type="PANTHER" id="PTHR22896">
    <property type="entry name" value="CDK5 AND ABL1 ENZYME SUBSTRATE 1"/>
    <property type="match status" value="1"/>
</dbReference>
<dbReference type="PANTHER" id="PTHR22896:SF3">
    <property type="entry name" value="CDK5 AND ABL1 ENZYME SUBSTRATE 2"/>
    <property type="match status" value="1"/>
</dbReference>
<dbReference type="Pfam" id="PF00134">
    <property type="entry name" value="Cyclin_N"/>
    <property type="match status" value="1"/>
</dbReference>
<dbReference type="PIRSF" id="PIRSF025798">
    <property type="entry name" value="Cables"/>
    <property type="match status" value="1"/>
</dbReference>
<dbReference type="SUPFAM" id="SSF47954">
    <property type="entry name" value="Cyclin-like"/>
    <property type="match status" value="1"/>
</dbReference>
<keyword id="KW-0131">Cell cycle</keyword>
<keyword id="KW-0132">Cell division</keyword>
<keyword id="KW-0195">Cyclin</keyword>
<keyword id="KW-0597">Phosphoprotein</keyword>
<keyword id="KW-1267">Proteomics identification</keyword>
<keyword id="KW-1185">Reference proteome</keyword>
<feature type="chain" id="PRO_0000080512" description="CDK5 and ABL1 enzyme substrate 2">
    <location>
        <begin position="1"/>
        <end position="478"/>
    </location>
</feature>
<feature type="region of interest" description="Disordered" evidence="2">
    <location>
        <begin position="1"/>
        <end position="121"/>
    </location>
</feature>
<feature type="region of interest" description="Disordered" evidence="2">
    <location>
        <begin position="257"/>
        <end position="296"/>
    </location>
</feature>
<feature type="compositionally biased region" description="Pro residues" evidence="2">
    <location>
        <begin position="11"/>
        <end position="24"/>
    </location>
</feature>
<feature type="compositionally biased region" description="Low complexity" evidence="2">
    <location>
        <begin position="25"/>
        <end position="35"/>
    </location>
</feature>
<feature type="compositionally biased region" description="Basic residues" evidence="2">
    <location>
        <begin position="36"/>
        <end position="46"/>
    </location>
</feature>
<feature type="compositionally biased region" description="Pro residues" evidence="2">
    <location>
        <begin position="69"/>
        <end position="92"/>
    </location>
</feature>
<feature type="modified residue" description="Phosphoserine" evidence="5 6">
    <location>
        <position position="130"/>
    </location>
</feature>
<feature type="modified residue" description="Phosphoserine" evidence="5 6">
    <location>
        <position position="208"/>
    </location>
</feature>
<feature type="sequence variant" id="VAR_026532" description="In dbSNP:rs6089219." evidence="3">
    <original>T</original>
    <variation>K</variation>
    <location>
        <position position="428"/>
    </location>
</feature>
<feature type="sequence conflict" description="In Ref. 2; AAH03122." evidence="4" ref="2">
    <original>S</original>
    <variation>P</variation>
    <location>
        <position position="277"/>
    </location>
</feature>
<sequence length="478" mass="52235">MAAAAAGGAPGPAPGPAGPPPPAAPTSAARAPPQALRRRGDSRRRQAALFFLNNISLDGRPPSLGPGGEKPPPPPAEAREPPAPPPPEPPTGLPARTPAPQGLLSPTQVPTGLGLDGQRQRKRVTSQRCSLEFLEDAVGCAPAQRTKHTSGSPRHKGLKKTHFIKNMRQYDTRNSRIVLICAKRSLCAAFSVLPYGEGLRISDLRVDSQKQRHPSGGVSVSSEMVFELEGVELGADGKVVSYAKFLYPTNALVTHKSDSHGLLPTPRPSVPRTLPGSRHKPAPTKSAPASTELGSDVGDTLEYNPNLLDDPQWPCGKHKRVLIFASYMTTVIEYVKPSDLKKDMNETFREKFPHVKLTLSKIRSLKREMRSLSEECSLEPVTVAMAYVYFEKLVLQGKLSKQNRKLCAGACVLLAAKISSDLRKSGVTQLIDKLEERFRFNRRDLIGFEFTVLVALELALYLPENQVLPHYRRLTQQF</sequence>
<reference key="1">
    <citation type="journal article" date="2001" name="Nature">
        <title>The DNA sequence and comparative analysis of human chromosome 20.</title>
        <authorList>
            <person name="Deloukas P."/>
            <person name="Matthews L.H."/>
            <person name="Ashurst J.L."/>
            <person name="Burton J."/>
            <person name="Gilbert J.G.R."/>
            <person name="Jones M."/>
            <person name="Stavrides G."/>
            <person name="Almeida J.P."/>
            <person name="Babbage A.K."/>
            <person name="Bagguley C.L."/>
            <person name="Bailey J."/>
            <person name="Barlow K.F."/>
            <person name="Bates K.N."/>
            <person name="Beard L.M."/>
            <person name="Beare D.M."/>
            <person name="Beasley O.P."/>
            <person name="Bird C.P."/>
            <person name="Blakey S.E."/>
            <person name="Bridgeman A.M."/>
            <person name="Brown A.J."/>
            <person name="Buck D."/>
            <person name="Burrill W.D."/>
            <person name="Butler A.P."/>
            <person name="Carder C."/>
            <person name="Carter N.P."/>
            <person name="Chapman J.C."/>
            <person name="Clamp M."/>
            <person name="Clark G."/>
            <person name="Clark L.N."/>
            <person name="Clark S.Y."/>
            <person name="Clee C.M."/>
            <person name="Clegg S."/>
            <person name="Cobley V.E."/>
            <person name="Collier R.E."/>
            <person name="Connor R.E."/>
            <person name="Corby N.R."/>
            <person name="Coulson A."/>
            <person name="Coville G.J."/>
            <person name="Deadman R."/>
            <person name="Dhami P.D."/>
            <person name="Dunn M."/>
            <person name="Ellington A.G."/>
            <person name="Frankland J.A."/>
            <person name="Fraser A."/>
            <person name="French L."/>
            <person name="Garner P."/>
            <person name="Grafham D.V."/>
            <person name="Griffiths C."/>
            <person name="Griffiths M.N.D."/>
            <person name="Gwilliam R."/>
            <person name="Hall R.E."/>
            <person name="Hammond S."/>
            <person name="Harley J.L."/>
            <person name="Heath P.D."/>
            <person name="Ho S."/>
            <person name="Holden J.L."/>
            <person name="Howden P.J."/>
            <person name="Huckle E."/>
            <person name="Hunt A.R."/>
            <person name="Hunt S.E."/>
            <person name="Jekosch K."/>
            <person name="Johnson C.M."/>
            <person name="Johnson D."/>
            <person name="Kay M.P."/>
            <person name="Kimberley A.M."/>
            <person name="King A."/>
            <person name="Knights A."/>
            <person name="Laird G.K."/>
            <person name="Lawlor S."/>
            <person name="Lehvaeslaiho M.H."/>
            <person name="Leversha M.A."/>
            <person name="Lloyd C."/>
            <person name="Lloyd D.M."/>
            <person name="Lovell J.D."/>
            <person name="Marsh V.L."/>
            <person name="Martin S.L."/>
            <person name="McConnachie L.J."/>
            <person name="McLay K."/>
            <person name="McMurray A.A."/>
            <person name="Milne S.A."/>
            <person name="Mistry D."/>
            <person name="Moore M.J.F."/>
            <person name="Mullikin J.C."/>
            <person name="Nickerson T."/>
            <person name="Oliver K."/>
            <person name="Parker A."/>
            <person name="Patel R."/>
            <person name="Pearce T.A.V."/>
            <person name="Peck A.I."/>
            <person name="Phillimore B.J.C.T."/>
            <person name="Prathalingam S.R."/>
            <person name="Plumb R.W."/>
            <person name="Ramsay H."/>
            <person name="Rice C.M."/>
            <person name="Ross M.T."/>
            <person name="Scott C.E."/>
            <person name="Sehra H.K."/>
            <person name="Shownkeen R."/>
            <person name="Sims S."/>
            <person name="Skuce C.D."/>
            <person name="Smith M.L."/>
            <person name="Soderlund C."/>
            <person name="Steward C.A."/>
            <person name="Sulston J.E."/>
            <person name="Swann R.M."/>
            <person name="Sycamore N."/>
            <person name="Taylor R."/>
            <person name="Tee L."/>
            <person name="Thomas D.W."/>
            <person name="Thorpe A."/>
            <person name="Tracey A."/>
            <person name="Tromans A.C."/>
            <person name="Vaudin M."/>
            <person name="Wall M."/>
            <person name="Wallis J.M."/>
            <person name="Whitehead S.L."/>
            <person name="Whittaker P."/>
            <person name="Willey D.L."/>
            <person name="Williams L."/>
            <person name="Williams S.A."/>
            <person name="Wilming L."/>
            <person name="Wray P.W."/>
            <person name="Hubbard T."/>
            <person name="Durbin R.M."/>
            <person name="Bentley D.R."/>
            <person name="Beck S."/>
            <person name="Rogers J."/>
        </authorList>
    </citation>
    <scope>NUCLEOTIDE SEQUENCE [LARGE SCALE GENOMIC DNA]</scope>
</reference>
<reference key="2">
    <citation type="journal article" date="2004" name="Genome Res.">
        <title>The status, quality, and expansion of the NIH full-length cDNA project: the Mammalian Gene Collection (MGC).</title>
        <authorList>
            <consortium name="The MGC Project Team"/>
        </authorList>
    </citation>
    <scope>NUCLEOTIDE SEQUENCE [LARGE SCALE MRNA] OF 154-478</scope>
    <scope>VARIANT LYS-428</scope>
    <source>
        <tissue>Eye</tissue>
    </source>
</reference>
<reference key="3">
    <citation type="journal article" date="2008" name="Mol. Cell">
        <title>Kinase-selective enrichment enables quantitative phosphoproteomics of the kinome across the cell cycle.</title>
        <authorList>
            <person name="Daub H."/>
            <person name="Olsen J.V."/>
            <person name="Bairlein M."/>
            <person name="Gnad F."/>
            <person name="Oppermann F.S."/>
            <person name="Korner R."/>
            <person name="Greff Z."/>
            <person name="Keri G."/>
            <person name="Stemmann O."/>
            <person name="Mann M."/>
        </authorList>
    </citation>
    <scope>PHOSPHORYLATION [LARGE SCALE ANALYSIS] AT SER-130 AND SER-208</scope>
    <scope>IDENTIFICATION BY MASS SPECTROMETRY [LARGE SCALE ANALYSIS]</scope>
    <source>
        <tissue>Cervix carcinoma</tissue>
    </source>
</reference>
<reference key="4">
    <citation type="journal article" date="2009" name="Mol. Cell. Proteomics">
        <title>Large-scale proteomics analysis of the human kinome.</title>
        <authorList>
            <person name="Oppermann F.S."/>
            <person name="Gnad F."/>
            <person name="Olsen J.V."/>
            <person name="Hornberger R."/>
            <person name="Greff Z."/>
            <person name="Keri G."/>
            <person name="Mann M."/>
            <person name="Daub H."/>
        </authorList>
    </citation>
    <scope>PHOSPHORYLATION [LARGE SCALE ANALYSIS] AT SER-130 AND SER-208</scope>
    <scope>IDENTIFICATION BY MASS SPECTROMETRY [LARGE SCALE ANALYSIS]</scope>
</reference>
<reference key="5">
    <citation type="journal article" date="2009" name="Sci. Signal.">
        <title>Quantitative phosphoproteomic analysis of T cell receptor signaling reveals system-wide modulation of protein-protein interactions.</title>
        <authorList>
            <person name="Mayya V."/>
            <person name="Lundgren D.H."/>
            <person name="Hwang S.-I."/>
            <person name="Rezaul K."/>
            <person name="Wu L."/>
            <person name="Eng J.K."/>
            <person name="Rodionov V."/>
            <person name="Han D.K."/>
        </authorList>
    </citation>
    <scope>IDENTIFICATION BY MASS SPECTROMETRY [LARGE SCALE ANALYSIS]</scope>
    <source>
        <tissue>Leukemic T-cell</tissue>
    </source>
</reference>
<name>CABL2_HUMAN</name>
<evidence type="ECO:0000250" key="1"/>
<evidence type="ECO:0000256" key="2">
    <source>
        <dbReference type="SAM" id="MobiDB-lite"/>
    </source>
</evidence>
<evidence type="ECO:0000269" key="3">
    <source>
    </source>
</evidence>
<evidence type="ECO:0000305" key="4"/>
<evidence type="ECO:0007744" key="5">
    <source>
    </source>
</evidence>
<evidence type="ECO:0007744" key="6">
    <source>
    </source>
</evidence>
<proteinExistence type="evidence at protein level"/>
<comment type="function">
    <text>Unknown. Probably involved in G1-S cell cycle transition.</text>
</comment>
<comment type="subunit">
    <text evidence="1">Binds to CDK3, CDK5 and ABL1. The C-terminal cyclin-box-like region binds to CDK5 (By similarity).</text>
</comment>
<comment type="similarity">
    <text evidence="4">Belongs to the cyclin family.</text>
</comment>
<organism>
    <name type="scientific">Homo sapiens</name>
    <name type="common">Human</name>
    <dbReference type="NCBI Taxonomy" id="9606"/>
    <lineage>
        <taxon>Eukaryota</taxon>
        <taxon>Metazoa</taxon>
        <taxon>Chordata</taxon>
        <taxon>Craniata</taxon>
        <taxon>Vertebrata</taxon>
        <taxon>Euteleostomi</taxon>
        <taxon>Mammalia</taxon>
        <taxon>Eutheria</taxon>
        <taxon>Euarchontoglires</taxon>
        <taxon>Primates</taxon>
        <taxon>Haplorrhini</taxon>
        <taxon>Catarrhini</taxon>
        <taxon>Hominidae</taxon>
        <taxon>Homo</taxon>
    </lineage>
</organism>
<gene>
    <name type="primary">CABLES2</name>
    <name type="synonym">C20orf150</name>
</gene>
<accession>Q9BTV7</accession>
<accession>Q5JWL0</accession>
<accession>Q9BYK0</accession>
<protein>
    <recommendedName>
        <fullName>CDK5 and ABL1 enzyme substrate 2</fullName>
    </recommendedName>
    <alternativeName>
        <fullName>Interactor with CDK3 2</fullName>
        <shortName>Ik3-2</shortName>
    </alternativeName>
</protein>